<proteinExistence type="evidence at transcript level"/>
<comment type="subcellular location">
    <subcellularLocation>
        <location evidence="1">Cytoplasm</location>
    </subcellularLocation>
</comment>
<comment type="similarity">
    <text evidence="2">Belongs to the small heat shock protein (HSP20) family.</text>
</comment>
<reference key="1">
    <citation type="online journal article" date="1998" name="Plant Gene Register">
        <title>Characterization of a cDNA coding for cytoplasmic class II small heat stress proteins in Lycopersicon peruvianum.</title>
        <authorList>
            <person name="Forreiter C."/>
            <person name="Loew D."/>
        </authorList>
        <locator>PGR98-117</locator>
    </citation>
    <scope>NUCLEOTIDE SEQUENCE [MRNA]</scope>
</reference>
<sequence>MDLRLLGIDNTPLFHTLHHMMEAAGEDSVNAPSKIYVRDAKAMAATPADVKEYPNSYVFVVDMPGLKSGDIKVQVEEDNVLLISGERKREEEKEGAKFIRMERRVGKFMRKFSLPENANTDAISAVCQDGVLTVTVQKLPPPEPKKPKTIEVKVA</sequence>
<feature type="chain" id="PRO_0000252664" description="17.3 kDa class II heat shock protein">
    <location>
        <begin position="1"/>
        <end position="155"/>
    </location>
</feature>
<feature type="domain" description="sHSP" evidence="2">
    <location>
        <begin position="39"/>
        <end position="155"/>
    </location>
</feature>
<protein>
    <recommendedName>
        <fullName>17.3 kDa class II heat shock protein</fullName>
    </recommendedName>
    <alternativeName>
        <fullName>Hsp17.3</fullName>
    </alternativeName>
    <alternativeName>
        <fullName>Hsp20.2</fullName>
    </alternativeName>
</protein>
<dbReference type="EMBL" id="AJ225049">
    <property type="protein sequence ID" value="CAA12390.1"/>
    <property type="molecule type" value="mRNA"/>
</dbReference>
<dbReference type="SMR" id="O82013"/>
<dbReference type="GO" id="GO:0005737">
    <property type="term" value="C:cytoplasm"/>
    <property type="evidence" value="ECO:0007669"/>
    <property type="project" value="UniProtKB-SubCell"/>
</dbReference>
<dbReference type="FunFam" id="2.60.40.790:FF:000010">
    <property type="entry name" value="17.3 kDa class II heat shock protein-like"/>
    <property type="match status" value="1"/>
</dbReference>
<dbReference type="Gene3D" id="2.60.40.790">
    <property type="match status" value="1"/>
</dbReference>
<dbReference type="InterPro" id="IPR002068">
    <property type="entry name" value="A-crystallin/Hsp20_dom"/>
</dbReference>
<dbReference type="InterPro" id="IPR008978">
    <property type="entry name" value="HSP20-like_chaperone"/>
</dbReference>
<dbReference type="InterPro" id="IPR031107">
    <property type="entry name" value="Small_HSP"/>
</dbReference>
<dbReference type="PANTHER" id="PTHR11527">
    <property type="entry name" value="HEAT-SHOCK PROTEIN 20 FAMILY MEMBER"/>
    <property type="match status" value="1"/>
</dbReference>
<dbReference type="Pfam" id="PF00011">
    <property type="entry name" value="HSP20"/>
    <property type="match status" value="1"/>
</dbReference>
<dbReference type="SUPFAM" id="SSF49764">
    <property type="entry name" value="HSP20-like chaperones"/>
    <property type="match status" value="1"/>
</dbReference>
<dbReference type="PROSITE" id="PS01031">
    <property type="entry name" value="SHSP"/>
    <property type="match status" value="1"/>
</dbReference>
<name>HSP21_SOLPE</name>
<evidence type="ECO:0000250" key="1"/>
<evidence type="ECO:0000255" key="2">
    <source>
        <dbReference type="PROSITE-ProRule" id="PRU00285"/>
    </source>
</evidence>
<organism>
    <name type="scientific">Solanum peruvianum</name>
    <name type="common">Peruvian tomato</name>
    <name type="synonym">Lycopersicon peruvianum</name>
    <dbReference type="NCBI Taxonomy" id="4082"/>
    <lineage>
        <taxon>Eukaryota</taxon>
        <taxon>Viridiplantae</taxon>
        <taxon>Streptophyta</taxon>
        <taxon>Embryophyta</taxon>
        <taxon>Tracheophyta</taxon>
        <taxon>Spermatophyta</taxon>
        <taxon>Magnoliopsida</taxon>
        <taxon>eudicotyledons</taxon>
        <taxon>Gunneridae</taxon>
        <taxon>Pentapetalae</taxon>
        <taxon>asterids</taxon>
        <taxon>lamiids</taxon>
        <taxon>Solanales</taxon>
        <taxon>Solanaceae</taxon>
        <taxon>Solanoideae</taxon>
        <taxon>Solaneae</taxon>
        <taxon>Solanum</taxon>
        <taxon>Solanum subgen. Lycopersicon</taxon>
    </lineage>
</organism>
<accession>O82013</accession>
<keyword id="KW-0963">Cytoplasm</keyword>
<keyword id="KW-0346">Stress response</keyword>